<gene>
    <name evidence="1" type="primary">rny</name>
    <name type="ordered locus">CFF8240_0502</name>
</gene>
<keyword id="KW-1003">Cell membrane</keyword>
<keyword id="KW-0255">Endonuclease</keyword>
<keyword id="KW-0378">Hydrolase</keyword>
<keyword id="KW-0472">Membrane</keyword>
<keyword id="KW-0540">Nuclease</keyword>
<keyword id="KW-0694">RNA-binding</keyword>
<keyword id="KW-0812">Transmembrane</keyword>
<keyword id="KW-1133">Transmembrane helix</keyword>
<dbReference type="EC" id="3.1.-.-" evidence="1"/>
<dbReference type="EMBL" id="CP000487">
    <property type="protein sequence ID" value="ABK83316.1"/>
    <property type="molecule type" value="Genomic_DNA"/>
</dbReference>
<dbReference type="RefSeq" id="WP_002848839.1">
    <property type="nucleotide sequence ID" value="NC_008599.1"/>
</dbReference>
<dbReference type="SMR" id="A0RNB3"/>
<dbReference type="GeneID" id="61064346"/>
<dbReference type="KEGG" id="cff:CFF8240_0502"/>
<dbReference type="eggNOG" id="COG1418">
    <property type="taxonomic scope" value="Bacteria"/>
</dbReference>
<dbReference type="HOGENOM" id="CLU_028328_1_0_7"/>
<dbReference type="Proteomes" id="UP000000760">
    <property type="component" value="Chromosome"/>
</dbReference>
<dbReference type="GO" id="GO:0005886">
    <property type="term" value="C:plasma membrane"/>
    <property type="evidence" value="ECO:0007669"/>
    <property type="project" value="UniProtKB-SubCell"/>
</dbReference>
<dbReference type="GO" id="GO:0003723">
    <property type="term" value="F:RNA binding"/>
    <property type="evidence" value="ECO:0007669"/>
    <property type="project" value="UniProtKB-UniRule"/>
</dbReference>
<dbReference type="GO" id="GO:0004521">
    <property type="term" value="F:RNA endonuclease activity"/>
    <property type="evidence" value="ECO:0007669"/>
    <property type="project" value="UniProtKB-UniRule"/>
</dbReference>
<dbReference type="GO" id="GO:0006402">
    <property type="term" value="P:mRNA catabolic process"/>
    <property type="evidence" value="ECO:0007669"/>
    <property type="project" value="UniProtKB-UniRule"/>
</dbReference>
<dbReference type="CDD" id="cd00077">
    <property type="entry name" value="HDc"/>
    <property type="match status" value="1"/>
</dbReference>
<dbReference type="CDD" id="cd22431">
    <property type="entry name" value="KH-I_RNaseY"/>
    <property type="match status" value="1"/>
</dbReference>
<dbReference type="Gene3D" id="1.10.3210.10">
    <property type="entry name" value="Hypothetical protein af1432"/>
    <property type="match status" value="1"/>
</dbReference>
<dbReference type="HAMAP" id="MF_00335">
    <property type="entry name" value="RNase_Y"/>
    <property type="match status" value="1"/>
</dbReference>
<dbReference type="InterPro" id="IPR003607">
    <property type="entry name" value="HD/PDEase_dom"/>
</dbReference>
<dbReference type="InterPro" id="IPR006674">
    <property type="entry name" value="HD_domain"/>
</dbReference>
<dbReference type="InterPro" id="IPR006675">
    <property type="entry name" value="HDIG_dom"/>
</dbReference>
<dbReference type="InterPro" id="IPR036612">
    <property type="entry name" value="KH_dom_type_1_sf"/>
</dbReference>
<dbReference type="InterPro" id="IPR017705">
    <property type="entry name" value="Ribonuclease_Y"/>
</dbReference>
<dbReference type="InterPro" id="IPR022711">
    <property type="entry name" value="RNase_Y_N"/>
</dbReference>
<dbReference type="NCBIfam" id="TIGR00277">
    <property type="entry name" value="HDIG"/>
    <property type="match status" value="1"/>
</dbReference>
<dbReference type="NCBIfam" id="TIGR03319">
    <property type="entry name" value="RNase_Y"/>
    <property type="match status" value="1"/>
</dbReference>
<dbReference type="PANTHER" id="PTHR12826">
    <property type="entry name" value="RIBONUCLEASE Y"/>
    <property type="match status" value="1"/>
</dbReference>
<dbReference type="PANTHER" id="PTHR12826:SF15">
    <property type="entry name" value="RIBONUCLEASE Y"/>
    <property type="match status" value="1"/>
</dbReference>
<dbReference type="Pfam" id="PF01966">
    <property type="entry name" value="HD"/>
    <property type="match status" value="1"/>
</dbReference>
<dbReference type="Pfam" id="PF12072">
    <property type="entry name" value="RNase_Y_N"/>
    <property type="match status" value="1"/>
</dbReference>
<dbReference type="SMART" id="SM00471">
    <property type="entry name" value="HDc"/>
    <property type="match status" value="1"/>
</dbReference>
<dbReference type="SUPFAM" id="SSF54791">
    <property type="entry name" value="Eukaryotic type KH-domain (KH-domain type I)"/>
    <property type="match status" value="1"/>
</dbReference>
<dbReference type="SUPFAM" id="SSF109604">
    <property type="entry name" value="HD-domain/PDEase-like"/>
    <property type="match status" value="1"/>
</dbReference>
<dbReference type="PROSITE" id="PS51831">
    <property type="entry name" value="HD"/>
    <property type="match status" value="1"/>
</dbReference>
<feature type="chain" id="PRO_0000344834" description="Ribonuclease Y">
    <location>
        <begin position="1"/>
        <end position="517"/>
    </location>
</feature>
<feature type="transmembrane region" description="Helical" evidence="1">
    <location>
        <begin position="1"/>
        <end position="21"/>
    </location>
</feature>
<feature type="domain" description="KH" evidence="1">
    <location>
        <begin position="207"/>
        <end position="273"/>
    </location>
</feature>
<feature type="domain" description="HD" evidence="2">
    <location>
        <begin position="333"/>
        <end position="426"/>
    </location>
</feature>
<evidence type="ECO:0000255" key="1">
    <source>
        <dbReference type="HAMAP-Rule" id="MF_00335"/>
    </source>
</evidence>
<evidence type="ECO:0000255" key="2">
    <source>
        <dbReference type="PROSITE-ProRule" id="PRU01175"/>
    </source>
</evidence>
<reference key="1">
    <citation type="submission" date="2006-11" db="EMBL/GenBank/DDBJ databases">
        <title>Sequence of Campylobacter fetus subsp. fetus 82-40.</title>
        <authorList>
            <person name="Fouts D.E."/>
            <person name="Nelson K.E."/>
        </authorList>
    </citation>
    <scope>NUCLEOTIDE SEQUENCE [LARGE SCALE GENOMIC DNA]</scope>
    <source>
        <strain>82-40</strain>
    </source>
</reference>
<protein>
    <recommendedName>
        <fullName evidence="1">Ribonuclease Y</fullName>
        <shortName evidence="1">RNase Y</shortName>
        <ecNumber evidence="1">3.1.-.-</ecNumber>
    </recommendedName>
</protein>
<comment type="function">
    <text evidence="1">Endoribonuclease that initiates mRNA decay.</text>
</comment>
<comment type="subcellular location">
    <subcellularLocation>
        <location evidence="1">Cell membrane</location>
        <topology evidence="1">Single-pass membrane protein</topology>
    </subcellularLocation>
</comment>
<comment type="similarity">
    <text evidence="1">Belongs to the RNase Y family.</text>
</comment>
<name>RNY_CAMFF</name>
<sequence>MIEVVVGIGAGLIGIGAGYLVAKKINDANYSIFLEQAKAKAKAIEFEAESILKDAKVKVNEAEFEAKKRYEEKGSRLQKEYNQKLDDISKKEHAILNEQEILKNSKDELEKSQNQAKTLYEEGLNLKIAYQDKLSETLKVLEHVAGLTEDEAKNMVLRKVEEKSRAEIAHIVRKYEEEAKKEAKKRANYILAQATSRYAGEFAAERLINVVNIKNDELKGRIIGKEGRNIKTLEMVLGVDVIIDDTPHAIILSSFNLYRRAIATRVIELLVEDGRIQPARIEEIHKKVCDEFEASILEEGENILIDLGISKVHPEIVKLIGKLKFRASYGQNALAHSLEVAHLSGIIAAETGGDEKLAKRAGILHDIGKALTHEYEGSHVDLGAEICKRYKEHPVVINAIYAHHGHEEALSVECAAVCAADALSAARPGARREVLESFLKRVEEIESIAISKEGIKGAYAINAGREIRVIANAKLVNDDEAVLLAKEIAEEIQDKIQYPGEIKVNVIRELRAIEFAK</sequence>
<accession>A0RNB3</accession>
<proteinExistence type="inferred from homology"/>
<organism>
    <name type="scientific">Campylobacter fetus subsp. fetus (strain 82-40)</name>
    <dbReference type="NCBI Taxonomy" id="360106"/>
    <lineage>
        <taxon>Bacteria</taxon>
        <taxon>Pseudomonadati</taxon>
        <taxon>Campylobacterota</taxon>
        <taxon>Epsilonproteobacteria</taxon>
        <taxon>Campylobacterales</taxon>
        <taxon>Campylobacteraceae</taxon>
        <taxon>Campylobacter</taxon>
    </lineage>
</organism>